<gene>
    <name evidence="1" type="primary">tilS</name>
    <name type="synonym">mesJ</name>
    <name type="ordered locus">bbp_104</name>
</gene>
<keyword id="KW-0067">ATP-binding</keyword>
<keyword id="KW-0963">Cytoplasm</keyword>
<keyword id="KW-0436">Ligase</keyword>
<keyword id="KW-0547">Nucleotide-binding</keyword>
<keyword id="KW-1185">Reference proteome</keyword>
<keyword id="KW-0819">tRNA processing</keyword>
<sequence>MLKDFIKNTNILNILLAYSGGIDSTFLLYQLLKLKKNNLNFTFRAIHINHQLHPDSEKWSDHCKKICINHNIPIIIKKITINSNKNRIEEIARKKRYQAIYKIIKPKEVLATGHNLNDQCETMLLALKRGSGITGLSSMSYKLNTIYKIKIVRPLLKISREDIKTWIYKHKIHWIEDTSNNDTKHDRNFLRLNIIPKLKNRWPYFEKNCSRSIEILNIEKKILKQEIKKKLNKYLVLNSILNISNFRYIDKNICSIILRHWIKINQNTMPTFKIVKEIYNKVIFSKIDSQPKIIIKNYQIRRYNNHLYWTKKIPRIENIILIWNNTQKKLTLPFQLGNIVQNDFGTTLPHPNNNETINIRFYTSHKVLITKNTKHKKLKTIFKEYKLPPWYRKKIPLIFYNNKFICALGLFVSNTHKKSNNEKNLKLSWISSIHNIIV</sequence>
<organism>
    <name type="scientific">Buchnera aphidicola subsp. Baizongia pistaciae (strain Bp)</name>
    <dbReference type="NCBI Taxonomy" id="224915"/>
    <lineage>
        <taxon>Bacteria</taxon>
        <taxon>Pseudomonadati</taxon>
        <taxon>Pseudomonadota</taxon>
        <taxon>Gammaproteobacteria</taxon>
        <taxon>Enterobacterales</taxon>
        <taxon>Erwiniaceae</taxon>
        <taxon>Buchnera</taxon>
    </lineage>
</organism>
<proteinExistence type="inferred from homology"/>
<accession>Q89AX3</accession>
<reference key="1">
    <citation type="journal article" date="2003" name="Proc. Natl. Acad. Sci. U.S.A.">
        <title>Reductive genome evolution in Buchnera aphidicola.</title>
        <authorList>
            <person name="van Ham R.C.H.J."/>
            <person name="Kamerbeek J."/>
            <person name="Palacios C."/>
            <person name="Rausell C."/>
            <person name="Abascal F."/>
            <person name="Bastolla U."/>
            <person name="Fernandez J.M."/>
            <person name="Jimenez L."/>
            <person name="Postigo M."/>
            <person name="Silva F.J."/>
            <person name="Tamames J."/>
            <person name="Viguera E."/>
            <person name="Latorre A."/>
            <person name="Valencia A."/>
            <person name="Moran F."/>
            <person name="Moya A."/>
        </authorList>
    </citation>
    <scope>NUCLEOTIDE SEQUENCE [LARGE SCALE GENOMIC DNA]</scope>
    <source>
        <strain>Bp</strain>
    </source>
</reference>
<feature type="chain" id="PRO_0000181666" description="tRNA(Ile)-lysidine synthase">
    <location>
        <begin position="1"/>
        <end position="438"/>
    </location>
</feature>
<feature type="binding site" evidence="1">
    <location>
        <begin position="19"/>
        <end position="24"/>
    </location>
    <ligand>
        <name>ATP</name>
        <dbReference type="ChEBI" id="CHEBI:30616"/>
    </ligand>
</feature>
<comment type="function">
    <text evidence="1">Ligates lysine onto the cytidine present at position 34 of the AUA codon-specific tRNA(Ile) that contains the anticodon CAU, in an ATP-dependent manner. Cytidine is converted to lysidine, thus changing the amino acid specificity of the tRNA from methionine to isoleucine.</text>
</comment>
<comment type="catalytic activity">
    <reaction evidence="1">
        <text>cytidine(34) in tRNA(Ile2) + L-lysine + ATP = lysidine(34) in tRNA(Ile2) + AMP + diphosphate + H(+)</text>
        <dbReference type="Rhea" id="RHEA:43744"/>
        <dbReference type="Rhea" id="RHEA-COMP:10625"/>
        <dbReference type="Rhea" id="RHEA-COMP:10670"/>
        <dbReference type="ChEBI" id="CHEBI:15378"/>
        <dbReference type="ChEBI" id="CHEBI:30616"/>
        <dbReference type="ChEBI" id="CHEBI:32551"/>
        <dbReference type="ChEBI" id="CHEBI:33019"/>
        <dbReference type="ChEBI" id="CHEBI:82748"/>
        <dbReference type="ChEBI" id="CHEBI:83665"/>
        <dbReference type="ChEBI" id="CHEBI:456215"/>
        <dbReference type="EC" id="6.3.4.19"/>
    </reaction>
</comment>
<comment type="subcellular location">
    <subcellularLocation>
        <location evidence="1">Cytoplasm</location>
    </subcellularLocation>
</comment>
<comment type="domain">
    <text>The N-terminal region contains the highly conserved SGGXDS motif, predicted to be a P-loop motif involved in ATP binding.</text>
</comment>
<comment type="similarity">
    <text evidence="1">Belongs to the tRNA(Ile)-lysidine synthase family.</text>
</comment>
<protein>
    <recommendedName>
        <fullName evidence="1">tRNA(Ile)-lysidine synthase</fullName>
        <ecNumber evidence="1">6.3.4.19</ecNumber>
    </recommendedName>
    <alternativeName>
        <fullName evidence="1">tRNA(Ile)-2-lysyl-cytidine synthase</fullName>
    </alternativeName>
    <alternativeName>
        <fullName evidence="1">tRNA(Ile)-lysidine synthetase</fullName>
    </alternativeName>
</protein>
<name>TILS_BUCBP</name>
<evidence type="ECO:0000255" key="1">
    <source>
        <dbReference type="HAMAP-Rule" id="MF_01161"/>
    </source>
</evidence>
<dbReference type="EC" id="6.3.4.19" evidence="1"/>
<dbReference type="EMBL" id="AE016826">
    <property type="protein sequence ID" value="AAO26839.1"/>
    <property type="molecule type" value="Genomic_DNA"/>
</dbReference>
<dbReference type="RefSeq" id="WP_011091240.1">
    <property type="nucleotide sequence ID" value="NC_004545.1"/>
</dbReference>
<dbReference type="SMR" id="Q89AX3"/>
<dbReference type="STRING" id="224915.bbp_104"/>
<dbReference type="KEGG" id="bab:bbp_104"/>
<dbReference type="eggNOG" id="COG0037">
    <property type="taxonomic scope" value="Bacteria"/>
</dbReference>
<dbReference type="HOGENOM" id="CLU_018869_2_0_6"/>
<dbReference type="OrthoDB" id="9807403at2"/>
<dbReference type="Proteomes" id="UP000000601">
    <property type="component" value="Chromosome"/>
</dbReference>
<dbReference type="GO" id="GO:0005737">
    <property type="term" value="C:cytoplasm"/>
    <property type="evidence" value="ECO:0007669"/>
    <property type="project" value="UniProtKB-SubCell"/>
</dbReference>
<dbReference type="GO" id="GO:0005524">
    <property type="term" value="F:ATP binding"/>
    <property type="evidence" value="ECO:0007669"/>
    <property type="project" value="UniProtKB-UniRule"/>
</dbReference>
<dbReference type="GO" id="GO:0032267">
    <property type="term" value="F:tRNA(Ile)-lysidine synthase activity"/>
    <property type="evidence" value="ECO:0007669"/>
    <property type="project" value="UniProtKB-EC"/>
</dbReference>
<dbReference type="GO" id="GO:0006400">
    <property type="term" value="P:tRNA modification"/>
    <property type="evidence" value="ECO:0007669"/>
    <property type="project" value="UniProtKB-UniRule"/>
</dbReference>
<dbReference type="CDD" id="cd01992">
    <property type="entry name" value="TilS_N"/>
    <property type="match status" value="1"/>
</dbReference>
<dbReference type="Gene3D" id="1.20.59.20">
    <property type="match status" value="1"/>
</dbReference>
<dbReference type="Gene3D" id="3.40.50.620">
    <property type="entry name" value="HUPs"/>
    <property type="match status" value="1"/>
</dbReference>
<dbReference type="HAMAP" id="MF_01161">
    <property type="entry name" value="tRNA_Ile_lys_synt"/>
    <property type="match status" value="1"/>
</dbReference>
<dbReference type="InterPro" id="IPR012796">
    <property type="entry name" value="Lysidine-tRNA-synth_C"/>
</dbReference>
<dbReference type="InterPro" id="IPR014729">
    <property type="entry name" value="Rossmann-like_a/b/a_fold"/>
</dbReference>
<dbReference type="InterPro" id="IPR011063">
    <property type="entry name" value="TilS/TtcA_N"/>
</dbReference>
<dbReference type="InterPro" id="IPR012094">
    <property type="entry name" value="tRNA_Ile_lys_synt"/>
</dbReference>
<dbReference type="InterPro" id="IPR012795">
    <property type="entry name" value="tRNA_Ile_lys_synt_N"/>
</dbReference>
<dbReference type="InterPro" id="IPR015262">
    <property type="entry name" value="tRNA_Ile_lys_synt_subst-bd"/>
</dbReference>
<dbReference type="NCBIfam" id="TIGR02433">
    <property type="entry name" value="lysidine_TilS_C"/>
    <property type="match status" value="1"/>
</dbReference>
<dbReference type="NCBIfam" id="TIGR02432">
    <property type="entry name" value="lysidine_TilS_N"/>
    <property type="match status" value="1"/>
</dbReference>
<dbReference type="PANTHER" id="PTHR43033">
    <property type="entry name" value="TRNA(ILE)-LYSIDINE SYNTHASE-RELATED"/>
    <property type="match status" value="1"/>
</dbReference>
<dbReference type="PANTHER" id="PTHR43033:SF1">
    <property type="entry name" value="TRNA(ILE)-LYSIDINE SYNTHASE-RELATED"/>
    <property type="match status" value="1"/>
</dbReference>
<dbReference type="Pfam" id="PF01171">
    <property type="entry name" value="ATP_bind_3"/>
    <property type="match status" value="1"/>
</dbReference>
<dbReference type="Pfam" id="PF09179">
    <property type="entry name" value="TilS"/>
    <property type="match status" value="1"/>
</dbReference>
<dbReference type="Pfam" id="PF11734">
    <property type="entry name" value="TilS_C"/>
    <property type="match status" value="1"/>
</dbReference>
<dbReference type="SMART" id="SM00977">
    <property type="entry name" value="TilS_C"/>
    <property type="match status" value="1"/>
</dbReference>
<dbReference type="SUPFAM" id="SSF52402">
    <property type="entry name" value="Adenine nucleotide alpha hydrolases-like"/>
    <property type="match status" value="1"/>
</dbReference>
<dbReference type="SUPFAM" id="SSF82829">
    <property type="entry name" value="MesJ substrate recognition domain-like"/>
    <property type="match status" value="1"/>
</dbReference>
<dbReference type="SUPFAM" id="SSF56037">
    <property type="entry name" value="PheT/TilS domain"/>
    <property type="match status" value="1"/>
</dbReference>